<dbReference type="EMBL" id="DQ821119">
    <property type="protein sequence ID" value="ABG79622.1"/>
    <property type="molecule type" value="Genomic_DNA"/>
</dbReference>
<dbReference type="RefSeq" id="YP_001023723.1">
    <property type="nucleotide sequence ID" value="NC_008829.1"/>
</dbReference>
<dbReference type="SMR" id="A2T355"/>
<dbReference type="GeneID" id="4788173"/>
<dbReference type="GO" id="GO:0009507">
    <property type="term" value="C:chloroplast"/>
    <property type="evidence" value="ECO:0007669"/>
    <property type="project" value="UniProtKB-SubCell"/>
</dbReference>
<dbReference type="GO" id="GO:0005763">
    <property type="term" value="C:mitochondrial small ribosomal subunit"/>
    <property type="evidence" value="ECO:0007669"/>
    <property type="project" value="TreeGrafter"/>
</dbReference>
<dbReference type="GO" id="GO:0070181">
    <property type="term" value="F:small ribosomal subunit rRNA binding"/>
    <property type="evidence" value="ECO:0007669"/>
    <property type="project" value="TreeGrafter"/>
</dbReference>
<dbReference type="GO" id="GO:0003735">
    <property type="term" value="F:structural constituent of ribosome"/>
    <property type="evidence" value="ECO:0007669"/>
    <property type="project" value="InterPro"/>
</dbReference>
<dbReference type="GO" id="GO:0006412">
    <property type="term" value="P:translation"/>
    <property type="evidence" value="ECO:0007669"/>
    <property type="project" value="UniProtKB-UniRule"/>
</dbReference>
<dbReference type="FunFam" id="4.10.640.10:FF:000002">
    <property type="entry name" value="30S ribosomal protein S18, chloroplastic"/>
    <property type="match status" value="1"/>
</dbReference>
<dbReference type="Gene3D" id="4.10.640.10">
    <property type="entry name" value="Ribosomal protein S18"/>
    <property type="match status" value="1"/>
</dbReference>
<dbReference type="HAMAP" id="MF_00270">
    <property type="entry name" value="Ribosomal_bS18"/>
    <property type="match status" value="1"/>
</dbReference>
<dbReference type="InterPro" id="IPR001648">
    <property type="entry name" value="Ribosomal_bS18"/>
</dbReference>
<dbReference type="InterPro" id="IPR018275">
    <property type="entry name" value="Ribosomal_bS18_CS"/>
</dbReference>
<dbReference type="InterPro" id="IPR036870">
    <property type="entry name" value="Ribosomal_bS18_sf"/>
</dbReference>
<dbReference type="NCBIfam" id="TIGR00165">
    <property type="entry name" value="S18"/>
    <property type="match status" value="1"/>
</dbReference>
<dbReference type="PANTHER" id="PTHR13479">
    <property type="entry name" value="30S RIBOSOMAL PROTEIN S18"/>
    <property type="match status" value="1"/>
</dbReference>
<dbReference type="PANTHER" id="PTHR13479:SF40">
    <property type="entry name" value="SMALL RIBOSOMAL SUBUNIT PROTEIN BS18M"/>
    <property type="match status" value="1"/>
</dbReference>
<dbReference type="Pfam" id="PF01084">
    <property type="entry name" value="Ribosomal_S18"/>
    <property type="match status" value="1"/>
</dbReference>
<dbReference type="PRINTS" id="PR00974">
    <property type="entry name" value="RIBOSOMALS18"/>
</dbReference>
<dbReference type="SUPFAM" id="SSF46911">
    <property type="entry name" value="Ribosomal protein S18"/>
    <property type="match status" value="1"/>
</dbReference>
<dbReference type="PROSITE" id="PS00057">
    <property type="entry name" value="RIBOSOMAL_S18"/>
    <property type="match status" value="1"/>
</dbReference>
<geneLocation type="chloroplast"/>
<protein>
    <recommendedName>
        <fullName evidence="1">Small ribosomal subunit protein bS18c</fullName>
    </recommendedName>
    <alternativeName>
        <fullName evidence="2">30S ribosomal protein S18, chloroplastic</fullName>
    </alternativeName>
</protein>
<feature type="chain" id="PRO_0000345567" description="Small ribosomal subunit protein bS18c">
    <location>
        <begin position="1"/>
        <end position="75"/>
    </location>
</feature>
<reference key="1">
    <citation type="journal article" date="2007" name="Am. Fern J.">
        <title>The complete plastid genome sequence of Angiopteris evecta (G. Forst.) Hoffm. (Marattiaceae).</title>
        <authorList>
            <person name="Roper J.M."/>
            <person name="Hansen S.K."/>
            <person name="Wolf P.G."/>
            <person name="Karol K.G."/>
            <person name="Mandoli D.F."/>
            <person name="Everett K.D.E."/>
            <person name="Kuehl J.V."/>
            <person name="Boore J.L."/>
        </authorList>
    </citation>
    <scope>NUCLEOTIDE SEQUENCE [LARGE SCALE GENOMIC DNA]</scope>
</reference>
<accession>A2T355</accession>
<comment type="subunit">
    <text evidence="1">Part of the 30S ribosomal subunit.</text>
</comment>
<comment type="subcellular location">
    <subcellularLocation>
        <location>Plastid</location>
        <location>Chloroplast</location>
    </subcellularLocation>
</comment>
<comment type="similarity">
    <text evidence="1">Belongs to the bacterial ribosomal protein bS18 family.</text>
</comment>
<proteinExistence type="inferred from homology"/>
<evidence type="ECO:0000255" key="1">
    <source>
        <dbReference type="HAMAP-Rule" id="MF_00270"/>
    </source>
</evidence>
<evidence type="ECO:0000305" key="2"/>
<keyword id="KW-0150">Chloroplast</keyword>
<keyword id="KW-0934">Plastid</keyword>
<keyword id="KW-0687">Ribonucleoprotein</keyword>
<keyword id="KW-0689">Ribosomal protein</keyword>
<keyword id="KW-0694">RNA-binding</keyword>
<keyword id="KW-0699">rRNA-binding</keyword>
<sequence length="75" mass="8883">MNRTKRSSRRRLPPIRSGEIIDYKNISLLRRFMSEQGKILSRRINRLTSKQQRLMTVAIKRARILALSPFLNNES</sequence>
<gene>
    <name evidence="1" type="primary">rps18</name>
</gene>
<organism>
    <name type="scientific">Angiopteris evecta</name>
    <name type="common">Mule's foot fern</name>
    <name type="synonym">Polypodium evectum</name>
    <dbReference type="NCBI Taxonomy" id="13825"/>
    <lineage>
        <taxon>Eukaryota</taxon>
        <taxon>Viridiplantae</taxon>
        <taxon>Streptophyta</taxon>
        <taxon>Embryophyta</taxon>
        <taxon>Tracheophyta</taxon>
        <taxon>Polypodiopsida</taxon>
        <taxon>Marattiidae</taxon>
        <taxon>Marattiales</taxon>
        <taxon>Marattiaceae</taxon>
        <taxon>Angiopteris</taxon>
    </lineage>
</organism>
<name>RR18_ANGEV</name>